<sequence length="66" mass="7678">MQHELQPDSLVDLKFIMADTGFGKTFIYDRIKSGDLPKAKVIHGRARWLYRDHCEFKNKLLSRANG</sequence>
<comment type="function">
    <text evidence="1">Transcription inhibitory protein for the torCAD operon. Also acts as an excisionase and plays an essential role in the defective prophage CPS53 excision (By similarity).</text>
</comment>
<comment type="subunit">
    <text evidence="1">Interacts with TorR. Binds to the effector domain of TorR. This interaction, which does not interfere with TorR DNA binding activity, probably prevents the recruitment of RNA polymerase to the torCAD promoter. Binds to DNA (By similarity).</text>
</comment>
<comment type="similarity">
    <text evidence="2">Belongs to the phage AlpA excisionase family.</text>
</comment>
<organism>
    <name type="scientific">Escherichia coli (strain UTI89 / UPEC)</name>
    <dbReference type="NCBI Taxonomy" id="364106"/>
    <lineage>
        <taxon>Bacteria</taxon>
        <taxon>Pseudomonadati</taxon>
        <taxon>Pseudomonadota</taxon>
        <taxon>Gammaproteobacteria</taxon>
        <taxon>Enterobacterales</taxon>
        <taxon>Enterobacteriaceae</taxon>
        <taxon>Escherichia</taxon>
    </lineage>
</organism>
<name>TORI_ECOUT</name>
<protein>
    <recommendedName>
        <fullName>Response regulator inhibitor for tor operon</fullName>
        <shortName>Tor inhibitor</shortName>
    </recommendedName>
</protein>
<evidence type="ECO:0000250" key="1"/>
<evidence type="ECO:0000305" key="2"/>
<dbReference type="EMBL" id="CP000243">
    <property type="protein sequence ID" value="ABE08160.1"/>
    <property type="molecule type" value="Genomic_DNA"/>
</dbReference>
<dbReference type="RefSeq" id="WP_001163428.1">
    <property type="nucleotide sequence ID" value="NZ_CP064825.1"/>
</dbReference>
<dbReference type="BMRB" id="Q1R904"/>
<dbReference type="SMR" id="Q1R904"/>
<dbReference type="GeneID" id="93774774"/>
<dbReference type="KEGG" id="eci:UTI89_C2694"/>
<dbReference type="HOGENOM" id="CLU_140176_22_2_6"/>
<dbReference type="Proteomes" id="UP000001952">
    <property type="component" value="Chromosome"/>
</dbReference>
<dbReference type="GO" id="GO:0003677">
    <property type="term" value="F:DNA binding"/>
    <property type="evidence" value="ECO:0007669"/>
    <property type="project" value="UniProtKB-KW"/>
</dbReference>
<dbReference type="GO" id="GO:0006310">
    <property type="term" value="P:DNA recombination"/>
    <property type="evidence" value="ECO:0007669"/>
    <property type="project" value="UniProtKB-KW"/>
</dbReference>
<dbReference type="Gene3D" id="1.10.238.160">
    <property type="match status" value="1"/>
</dbReference>
<proteinExistence type="inferred from homology"/>
<accession>Q1R904</accession>
<keyword id="KW-0233">DNA recombination</keyword>
<keyword id="KW-0238">DNA-binding</keyword>
<keyword id="KW-0678">Repressor</keyword>
<keyword id="KW-0804">Transcription</keyword>
<keyword id="KW-0805">Transcription regulation</keyword>
<feature type="chain" id="PRO_0000252163" description="Response regulator inhibitor for tor operon">
    <location>
        <begin position="1"/>
        <end position="66"/>
    </location>
</feature>
<gene>
    <name type="primary">torI</name>
    <name type="ordered locus">UTI89_C2694</name>
</gene>
<reference key="1">
    <citation type="journal article" date="2006" name="Proc. Natl. Acad. Sci. U.S.A.">
        <title>Identification of genes subject to positive selection in uropathogenic strains of Escherichia coli: a comparative genomics approach.</title>
        <authorList>
            <person name="Chen S.L."/>
            <person name="Hung C.-S."/>
            <person name="Xu J."/>
            <person name="Reigstad C.S."/>
            <person name="Magrini V."/>
            <person name="Sabo A."/>
            <person name="Blasiar D."/>
            <person name="Bieri T."/>
            <person name="Meyer R.R."/>
            <person name="Ozersky P."/>
            <person name="Armstrong J.R."/>
            <person name="Fulton R.S."/>
            <person name="Latreille J.P."/>
            <person name="Spieth J."/>
            <person name="Hooton T.M."/>
            <person name="Mardis E.R."/>
            <person name="Hultgren S.J."/>
            <person name="Gordon J.I."/>
        </authorList>
    </citation>
    <scope>NUCLEOTIDE SEQUENCE [LARGE SCALE GENOMIC DNA]</scope>
    <source>
        <strain>UTI89 / UPEC</strain>
    </source>
</reference>